<keyword id="KW-1185">Reference proteome</keyword>
<keyword id="KW-0687">Ribonucleoprotein</keyword>
<keyword id="KW-0689">Ribosomal protein</keyword>
<proteinExistence type="inferred from homology"/>
<gene>
    <name evidence="1" type="primary">rpmH</name>
    <name type="ordered locus">VF_0005</name>
</gene>
<feature type="chain" id="PRO_0000187500" description="Large ribosomal subunit protein bL34">
    <location>
        <begin position="1"/>
        <end position="44"/>
    </location>
</feature>
<organism>
    <name type="scientific">Aliivibrio fischeri (strain ATCC 700601 / ES114)</name>
    <name type="common">Vibrio fischeri</name>
    <dbReference type="NCBI Taxonomy" id="312309"/>
    <lineage>
        <taxon>Bacteria</taxon>
        <taxon>Pseudomonadati</taxon>
        <taxon>Pseudomonadota</taxon>
        <taxon>Gammaproteobacteria</taxon>
        <taxon>Vibrionales</taxon>
        <taxon>Vibrionaceae</taxon>
        <taxon>Aliivibrio</taxon>
    </lineage>
</organism>
<reference key="1">
    <citation type="journal article" date="2005" name="Proc. Natl. Acad. Sci. U.S.A.">
        <title>Complete genome sequence of Vibrio fischeri: a symbiotic bacterium with pathogenic congeners.</title>
        <authorList>
            <person name="Ruby E.G."/>
            <person name="Urbanowski M."/>
            <person name="Campbell J."/>
            <person name="Dunn A."/>
            <person name="Faini M."/>
            <person name="Gunsalus R."/>
            <person name="Lostroh P."/>
            <person name="Lupp C."/>
            <person name="McCann J."/>
            <person name="Millikan D."/>
            <person name="Schaefer A."/>
            <person name="Stabb E."/>
            <person name="Stevens A."/>
            <person name="Visick K."/>
            <person name="Whistler C."/>
            <person name="Greenberg E.P."/>
        </authorList>
    </citation>
    <scope>NUCLEOTIDE SEQUENCE [LARGE SCALE GENOMIC DNA]</scope>
    <source>
        <strain>ATCC 700601 / ES114</strain>
    </source>
</reference>
<sequence length="44" mass="5195">MKRTFQPSVLKRKRSHGFRARMATKNGRNVINARRAKGRKRLSK</sequence>
<comment type="similarity">
    <text evidence="1">Belongs to the bacterial ribosomal protein bL34 family.</text>
</comment>
<protein>
    <recommendedName>
        <fullName evidence="1">Large ribosomal subunit protein bL34</fullName>
    </recommendedName>
    <alternativeName>
        <fullName evidence="2">50S ribosomal protein L34</fullName>
    </alternativeName>
</protein>
<evidence type="ECO:0000255" key="1">
    <source>
        <dbReference type="HAMAP-Rule" id="MF_00391"/>
    </source>
</evidence>
<evidence type="ECO:0000305" key="2"/>
<dbReference type="EMBL" id="CP000020">
    <property type="protein sequence ID" value="AAW84500.1"/>
    <property type="molecule type" value="Genomic_DNA"/>
</dbReference>
<dbReference type="RefSeq" id="WP_005416778.1">
    <property type="nucleotide sequence ID" value="NZ_CAWLES010000001.1"/>
</dbReference>
<dbReference type="RefSeq" id="YP_203388.1">
    <property type="nucleotide sequence ID" value="NC_006840.2"/>
</dbReference>
<dbReference type="SMR" id="Q5E8Z6"/>
<dbReference type="STRING" id="312309.VF_0005"/>
<dbReference type="EnsemblBacteria" id="AAW84500">
    <property type="protein sequence ID" value="AAW84500"/>
    <property type="gene ID" value="VF_0005"/>
</dbReference>
<dbReference type="GeneID" id="56275595"/>
<dbReference type="KEGG" id="vfi:VF_0005"/>
<dbReference type="PATRIC" id="fig|312309.11.peg.6"/>
<dbReference type="eggNOG" id="COG0230">
    <property type="taxonomic scope" value="Bacteria"/>
</dbReference>
<dbReference type="HOGENOM" id="CLU_129938_2_0_6"/>
<dbReference type="OrthoDB" id="9804164at2"/>
<dbReference type="Proteomes" id="UP000000537">
    <property type="component" value="Chromosome I"/>
</dbReference>
<dbReference type="GO" id="GO:1990904">
    <property type="term" value="C:ribonucleoprotein complex"/>
    <property type="evidence" value="ECO:0007669"/>
    <property type="project" value="UniProtKB-KW"/>
</dbReference>
<dbReference type="GO" id="GO:0005840">
    <property type="term" value="C:ribosome"/>
    <property type="evidence" value="ECO:0007669"/>
    <property type="project" value="UniProtKB-KW"/>
</dbReference>
<dbReference type="GO" id="GO:0003735">
    <property type="term" value="F:structural constituent of ribosome"/>
    <property type="evidence" value="ECO:0007669"/>
    <property type="project" value="InterPro"/>
</dbReference>
<dbReference type="GO" id="GO:0006412">
    <property type="term" value="P:translation"/>
    <property type="evidence" value="ECO:0007669"/>
    <property type="project" value="UniProtKB-UniRule"/>
</dbReference>
<dbReference type="FunFam" id="1.10.287.3980:FF:000001">
    <property type="entry name" value="Mitochondrial ribosomal protein L34"/>
    <property type="match status" value="1"/>
</dbReference>
<dbReference type="Gene3D" id="1.10.287.3980">
    <property type="match status" value="1"/>
</dbReference>
<dbReference type="HAMAP" id="MF_00391">
    <property type="entry name" value="Ribosomal_bL34"/>
    <property type="match status" value="1"/>
</dbReference>
<dbReference type="InterPro" id="IPR000271">
    <property type="entry name" value="Ribosomal_bL34"/>
</dbReference>
<dbReference type="InterPro" id="IPR020939">
    <property type="entry name" value="Ribosomal_bL34_CS"/>
</dbReference>
<dbReference type="NCBIfam" id="TIGR01030">
    <property type="entry name" value="rpmH_bact"/>
    <property type="match status" value="1"/>
</dbReference>
<dbReference type="PANTHER" id="PTHR14503:SF4">
    <property type="entry name" value="LARGE RIBOSOMAL SUBUNIT PROTEIN BL34M"/>
    <property type="match status" value="1"/>
</dbReference>
<dbReference type="PANTHER" id="PTHR14503">
    <property type="entry name" value="MITOCHONDRIAL RIBOSOMAL PROTEIN 34 FAMILY MEMBER"/>
    <property type="match status" value="1"/>
</dbReference>
<dbReference type="Pfam" id="PF00468">
    <property type="entry name" value="Ribosomal_L34"/>
    <property type="match status" value="1"/>
</dbReference>
<dbReference type="PROSITE" id="PS00784">
    <property type="entry name" value="RIBOSOMAL_L34"/>
    <property type="match status" value="1"/>
</dbReference>
<accession>Q5E8Z6</accession>
<name>RL34_ALIF1</name>